<name>PFF1_PYRTR</name>
<accession>B2W0S3</accession>
<protein>
    <recommendedName>
        <fullName evidence="1">Vacuolar membrane protease</fullName>
        <ecNumber evidence="6">3.4.-.-</ecNumber>
    </recommendedName>
    <alternativeName>
        <fullName evidence="1">FXNA-related family protease 1</fullName>
    </alternativeName>
</protein>
<organism>
    <name type="scientific">Pyrenophora tritici-repentis (strain Pt-1C-BFP)</name>
    <name type="common">Wheat tan spot fungus</name>
    <name type="synonym">Drechslera tritici-repentis</name>
    <dbReference type="NCBI Taxonomy" id="426418"/>
    <lineage>
        <taxon>Eukaryota</taxon>
        <taxon>Fungi</taxon>
        <taxon>Dikarya</taxon>
        <taxon>Ascomycota</taxon>
        <taxon>Pezizomycotina</taxon>
        <taxon>Dothideomycetes</taxon>
        <taxon>Pleosporomycetidae</taxon>
        <taxon>Pleosporales</taxon>
        <taxon>Pleosporineae</taxon>
        <taxon>Pleosporaceae</taxon>
        <taxon>Pyrenophora</taxon>
    </lineage>
</organism>
<keyword id="KW-0325">Glycoprotein</keyword>
<keyword id="KW-0378">Hydrolase</keyword>
<keyword id="KW-0472">Membrane</keyword>
<keyword id="KW-0479">Metal-binding</keyword>
<keyword id="KW-0482">Metalloprotease</keyword>
<keyword id="KW-0645">Protease</keyword>
<keyword id="KW-1185">Reference proteome</keyword>
<keyword id="KW-0812">Transmembrane</keyword>
<keyword id="KW-1133">Transmembrane helix</keyword>
<keyword id="KW-0926">Vacuole</keyword>
<keyword id="KW-0862">Zinc</keyword>
<gene>
    <name type="ORF">PTRG_04058</name>
</gene>
<dbReference type="EC" id="3.4.-.-" evidence="6"/>
<dbReference type="EMBL" id="DS231617">
    <property type="protein sequence ID" value="EDU46896.1"/>
    <property type="molecule type" value="Genomic_DNA"/>
</dbReference>
<dbReference type="RefSeq" id="XP_001934391.1">
    <property type="nucleotide sequence ID" value="XM_001934356.1"/>
</dbReference>
<dbReference type="SMR" id="B2W0S3"/>
<dbReference type="FunCoup" id="B2W0S3">
    <property type="interactions" value="4"/>
</dbReference>
<dbReference type="STRING" id="426418.B2W0S3"/>
<dbReference type="EnsemblFungi" id="EDU46896">
    <property type="protein sequence ID" value="EDU46896"/>
    <property type="gene ID" value="PTRG_04058"/>
</dbReference>
<dbReference type="GeneID" id="6342294"/>
<dbReference type="KEGG" id="ptrr:6342294"/>
<dbReference type="eggNOG" id="KOG2194">
    <property type="taxonomic scope" value="Eukaryota"/>
</dbReference>
<dbReference type="HOGENOM" id="CLU_006412_1_0_1"/>
<dbReference type="InParanoid" id="B2W0S3"/>
<dbReference type="OMA" id="TPWPVTI"/>
<dbReference type="OrthoDB" id="19904at28556"/>
<dbReference type="Proteomes" id="UP000001471">
    <property type="component" value="Unassembled WGS sequence"/>
</dbReference>
<dbReference type="GO" id="GO:0005774">
    <property type="term" value="C:vacuolar membrane"/>
    <property type="evidence" value="ECO:0007669"/>
    <property type="project" value="UniProtKB-SubCell"/>
</dbReference>
<dbReference type="GO" id="GO:0046872">
    <property type="term" value="F:metal ion binding"/>
    <property type="evidence" value="ECO:0007669"/>
    <property type="project" value="UniProtKB-KW"/>
</dbReference>
<dbReference type="GO" id="GO:0008235">
    <property type="term" value="F:metalloexopeptidase activity"/>
    <property type="evidence" value="ECO:0007669"/>
    <property type="project" value="InterPro"/>
</dbReference>
<dbReference type="GO" id="GO:0006508">
    <property type="term" value="P:proteolysis"/>
    <property type="evidence" value="ECO:0007669"/>
    <property type="project" value="UniProtKB-KW"/>
</dbReference>
<dbReference type="CDD" id="cd03875">
    <property type="entry name" value="M28_Fxna_like"/>
    <property type="match status" value="1"/>
</dbReference>
<dbReference type="FunFam" id="3.40.630.10:FF:000057">
    <property type="entry name" value="Vacuolar membrane protease"/>
    <property type="match status" value="1"/>
</dbReference>
<dbReference type="Gene3D" id="3.40.630.10">
    <property type="entry name" value="Zn peptidases"/>
    <property type="match status" value="1"/>
</dbReference>
<dbReference type="InterPro" id="IPR048024">
    <property type="entry name" value="Fxna-like_M28_dom"/>
</dbReference>
<dbReference type="InterPro" id="IPR045175">
    <property type="entry name" value="M28_fam"/>
</dbReference>
<dbReference type="InterPro" id="IPR007484">
    <property type="entry name" value="Peptidase_M28"/>
</dbReference>
<dbReference type="InterPro" id="IPR053975">
    <property type="entry name" value="PFF1_C"/>
</dbReference>
<dbReference type="InterPro" id="IPR053976">
    <property type="entry name" value="PFF1_TM"/>
</dbReference>
<dbReference type="PANTHER" id="PTHR12147">
    <property type="entry name" value="METALLOPEPTIDASE M28 FAMILY MEMBER"/>
    <property type="match status" value="1"/>
</dbReference>
<dbReference type="PANTHER" id="PTHR12147:SF58">
    <property type="entry name" value="VACUOLAR MEMBRANE PROTEASE"/>
    <property type="match status" value="1"/>
</dbReference>
<dbReference type="Pfam" id="PF04389">
    <property type="entry name" value="Peptidase_M28"/>
    <property type="match status" value="1"/>
</dbReference>
<dbReference type="Pfam" id="PF22250">
    <property type="entry name" value="PFF1_C"/>
    <property type="match status" value="1"/>
</dbReference>
<dbReference type="Pfam" id="PF22251">
    <property type="entry name" value="PFF1_TM"/>
    <property type="match status" value="1"/>
</dbReference>
<dbReference type="SUPFAM" id="SSF53187">
    <property type="entry name" value="Zn-dependent exopeptidases"/>
    <property type="match status" value="1"/>
</dbReference>
<proteinExistence type="inferred from homology"/>
<sequence length="957" mass="105674">MARYNPFSFTPGPVVFFTTVIYVGLFAALLVTHLTVPDYPSDPPAGINLTEAWADLEHITRRFHPYNSHANDHVRGYLLSRIQGVIATKALDASQVEVIDDLTSNATFSSGATSVYFEGTNIIVVIRGSEDDEPFNSTDRKPNNGGVLVNAHYDSVSSGYGATDDGVGVVTVLQLLSYFTESHNWPKRTIILLLNNGEEDFLNGAKAFMRNPISQVPHTFVNLEGAGAGGRATLFRSTDTEVTRFYSKSKYPFGTVVSGDGFKKGLIRSETDYRVFHGELGLRGLDIAFMEPRARYHTVEDSTRETSMNSLWHMLSAALASTSGLAAVTGEEFSGSESLDNGRVNAGRGSDGVWFDLFGRVFVVFQLHTLFALCVTLLVVAPIALIGLTFGLSKADKNYLLARKAFVYSSDDDNPVQLYGWRGFFRFPIVFVSATAVVVALAYLLVRFNAFIIYSSPFAVWSMMLSAWFFVAWFFSRGADAMRPSALQRMYALIWLFIGSFVLLTIITVFVNNYQVVAGYPALFYFAVVFAALMLSYLELFFAPTKSAYARHFEHDTSSRRNSESASRPLTGSTTAARSDDRPVADDDATETTSLLRGDRRGFTRYGSRRDSTSEGDEDHAQGSRRLDLGNVYPGEQEWSGKLPSWIWIIQLLLLAPLVIVLVGQVALLLTSALYQTPSDGNSPLFIYLAIAALSVLLLAPTGPFIHRFTYHVPTFLFLVCLATVIYNLVAFPFSRDHRLKVYFVQRVNCETGANTVSLTGLDSYVQRIVGELPSAQDQPLNCTTPDVATRKELKTCEWEGLPAKVVPNAAGAAPFGNETNTDRWLEYSIHKGNRSNKATIRVVGLNTRACRIVFDSPITGLAVTGAVSDPRFKPVGAAGSREVRLWHREFGQPWNVALTWDAEEHAKLSGRVVCLWSDANTGSIPAFDEVQHYLPVWAIPSKISDGLVEGFKQFEI</sequence>
<evidence type="ECO:0000250" key="1">
    <source>
        <dbReference type="UniProtKB" id="P38244"/>
    </source>
</evidence>
<evidence type="ECO:0000250" key="2">
    <source>
        <dbReference type="UniProtKB" id="P80561"/>
    </source>
</evidence>
<evidence type="ECO:0000255" key="3"/>
<evidence type="ECO:0000255" key="4">
    <source>
        <dbReference type="PROSITE-ProRule" id="PRU00498"/>
    </source>
</evidence>
<evidence type="ECO:0000256" key="5">
    <source>
        <dbReference type="SAM" id="MobiDB-lite"/>
    </source>
</evidence>
<evidence type="ECO:0000305" key="6"/>
<feature type="chain" id="PRO_0000411738" description="Vacuolar membrane protease">
    <location>
        <begin position="1"/>
        <end position="957"/>
    </location>
</feature>
<feature type="topological domain" description="Cytoplasmic" evidence="1">
    <location>
        <begin position="1"/>
        <end position="10"/>
    </location>
</feature>
<feature type="transmembrane region" description="Helical; Name=1" evidence="3">
    <location>
        <begin position="11"/>
        <end position="31"/>
    </location>
</feature>
<feature type="topological domain" description="Vacuolar" evidence="1">
    <location>
        <begin position="32"/>
        <end position="369"/>
    </location>
</feature>
<feature type="transmembrane region" description="Helical; Name=2" evidence="3">
    <location>
        <begin position="370"/>
        <end position="390"/>
    </location>
</feature>
<feature type="topological domain" description="Cytoplasmic" evidence="1">
    <location>
        <begin position="391"/>
        <end position="423"/>
    </location>
</feature>
<feature type="transmembrane region" description="Helical; Name=3" evidence="3">
    <location>
        <begin position="424"/>
        <end position="444"/>
    </location>
</feature>
<feature type="topological domain" description="Vacuolar" evidence="1">
    <location>
        <begin position="445"/>
        <end position="450"/>
    </location>
</feature>
<feature type="transmembrane region" description="Helical; Name=4" evidence="3">
    <location>
        <begin position="451"/>
        <end position="471"/>
    </location>
</feature>
<feature type="topological domain" description="Cytoplasmic" evidence="1">
    <location>
        <begin position="472"/>
        <end position="490"/>
    </location>
</feature>
<feature type="transmembrane region" description="Helical; Name=5" evidence="3">
    <location>
        <begin position="491"/>
        <end position="511"/>
    </location>
</feature>
<feature type="topological domain" description="Vacuolar" evidence="1">
    <location>
        <begin position="512"/>
        <end position="521"/>
    </location>
</feature>
<feature type="transmembrane region" description="Helical; Name=6" evidence="3">
    <location>
        <begin position="522"/>
        <end position="542"/>
    </location>
</feature>
<feature type="topological domain" description="Cytoplasmic" evidence="1">
    <location>
        <begin position="543"/>
        <end position="642"/>
    </location>
</feature>
<feature type="transmembrane region" description="Helical; Name=7" evidence="3">
    <location>
        <begin position="643"/>
        <end position="663"/>
    </location>
</feature>
<feature type="topological domain" description="Vacuolar" evidence="1">
    <location>
        <begin position="664"/>
        <end position="685"/>
    </location>
</feature>
<feature type="transmembrane region" description="Helical; Name=8" evidence="3">
    <location>
        <begin position="686"/>
        <end position="706"/>
    </location>
</feature>
<feature type="topological domain" description="Cytoplasmic" evidence="1">
    <location>
        <begin position="707"/>
        <end position="713"/>
    </location>
</feature>
<feature type="transmembrane region" description="Helical; Name=9" evidence="3">
    <location>
        <begin position="714"/>
        <end position="734"/>
    </location>
</feature>
<feature type="topological domain" description="Vacuolar" evidence="1">
    <location>
        <begin position="735"/>
        <end position="957"/>
    </location>
</feature>
<feature type="region of interest" description="Disordered" evidence="5">
    <location>
        <begin position="560"/>
        <end position="591"/>
    </location>
</feature>
<feature type="region of interest" description="Disordered" evidence="5">
    <location>
        <begin position="603"/>
        <end position="628"/>
    </location>
</feature>
<feature type="compositionally biased region" description="Polar residues" evidence="5">
    <location>
        <begin position="564"/>
        <end position="577"/>
    </location>
</feature>
<feature type="active site" description="Proton acceptor" evidence="2">
    <location>
        <position position="198"/>
    </location>
</feature>
<feature type="binding site" evidence="2">
    <location>
        <position position="152"/>
    </location>
    <ligand>
        <name>Zn(2+)</name>
        <dbReference type="ChEBI" id="CHEBI:29105"/>
        <label>1</label>
        <note>catalytic</note>
    </ligand>
</feature>
<feature type="binding site" evidence="2">
    <location>
        <position position="164"/>
    </location>
    <ligand>
        <name>Zn(2+)</name>
        <dbReference type="ChEBI" id="CHEBI:29105"/>
        <label>1</label>
        <note>catalytic</note>
    </ligand>
</feature>
<feature type="binding site" evidence="2">
    <location>
        <position position="164"/>
    </location>
    <ligand>
        <name>Zn(2+)</name>
        <dbReference type="ChEBI" id="CHEBI:29105"/>
        <label>2</label>
        <note>catalytic</note>
    </ligand>
</feature>
<feature type="binding site" evidence="2">
    <location>
        <position position="199"/>
    </location>
    <ligand>
        <name>Zn(2+)</name>
        <dbReference type="ChEBI" id="CHEBI:29105"/>
        <label>2</label>
        <note>catalytic</note>
    </ligand>
</feature>
<feature type="binding site" evidence="2">
    <location>
        <position position="224"/>
    </location>
    <ligand>
        <name>Zn(2+)</name>
        <dbReference type="ChEBI" id="CHEBI:29105"/>
        <label>1</label>
        <note>catalytic</note>
    </ligand>
</feature>
<feature type="binding site" evidence="2">
    <location>
        <position position="297"/>
    </location>
    <ligand>
        <name>Zn(2+)</name>
        <dbReference type="ChEBI" id="CHEBI:29105"/>
        <label>2</label>
        <note>catalytic</note>
    </ligand>
</feature>
<feature type="site" description="Transition state stabilizer" evidence="2">
    <location>
        <position position="296"/>
    </location>
</feature>
<feature type="glycosylation site" description="N-linked (GlcNAc...) asparagine" evidence="4">
    <location>
        <position position="48"/>
    </location>
</feature>
<feature type="glycosylation site" description="N-linked (GlcNAc...) asparagine" evidence="4">
    <location>
        <position position="105"/>
    </location>
</feature>
<feature type="glycosylation site" description="N-linked (GlcNAc...) asparagine" evidence="4">
    <location>
        <position position="136"/>
    </location>
</feature>
<feature type="glycosylation site" description="N-linked (GlcNAc...) asparagine" evidence="4">
    <location>
        <position position="782"/>
    </location>
</feature>
<feature type="glycosylation site" description="N-linked (GlcNAc...) asparagine" evidence="4">
    <location>
        <position position="818"/>
    </location>
</feature>
<feature type="glycosylation site" description="N-linked (GlcNAc...) asparagine" evidence="4">
    <location>
        <position position="834"/>
    </location>
</feature>
<reference key="1">
    <citation type="journal article" date="2013" name="G3 (Bethesda)">
        <title>Comparative genomics of a plant-pathogenic fungus, Pyrenophora tritici-repentis, reveals transduplication and the impact of repeat elements on pathogenicity and population divergence.</title>
        <authorList>
            <person name="Manning V.A."/>
            <person name="Pandelova I."/>
            <person name="Dhillon B."/>
            <person name="Wilhelm L.J."/>
            <person name="Goodwin S.B."/>
            <person name="Berlin A.M."/>
            <person name="Figueroa M."/>
            <person name="Freitag M."/>
            <person name="Hane J.K."/>
            <person name="Henrissat B."/>
            <person name="Holman W.H."/>
            <person name="Kodira C.D."/>
            <person name="Martin J."/>
            <person name="Oliver R.P."/>
            <person name="Robbertse B."/>
            <person name="Schackwitz W."/>
            <person name="Schwartz D.C."/>
            <person name="Spatafora J.W."/>
            <person name="Turgeon B.G."/>
            <person name="Yandava C."/>
            <person name="Young S."/>
            <person name="Zhou S."/>
            <person name="Zeng Q."/>
            <person name="Grigoriev I.V."/>
            <person name="Ma L.-J."/>
            <person name="Ciuffetti L.M."/>
        </authorList>
    </citation>
    <scope>NUCLEOTIDE SEQUENCE [LARGE SCALE GENOMIC DNA]</scope>
    <source>
        <strain>Pt-1C-BFP</strain>
    </source>
</reference>
<comment type="function">
    <text evidence="1">May be involved in vacuolar sorting and osmoregulation.</text>
</comment>
<comment type="cofactor">
    <cofactor evidence="2">
        <name>Zn(2+)</name>
        <dbReference type="ChEBI" id="CHEBI:29105"/>
    </cofactor>
    <text evidence="2">Binds 2 Zn(2+) ions per subunit.</text>
</comment>
<comment type="subcellular location">
    <subcellularLocation>
        <location evidence="1">Vacuole membrane</location>
        <topology evidence="3">Multi-pass membrane protein</topology>
    </subcellularLocation>
</comment>
<comment type="similarity">
    <text evidence="6">Belongs to the peptidase M28 family.</text>
</comment>